<feature type="chain" id="PRO_1000061542" description="Putative pre-16S rRNA nuclease">
    <location>
        <begin position="1"/>
        <end position="151"/>
    </location>
</feature>
<gene>
    <name type="ordered locus">NMC1275</name>
</gene>
<evidence type="ECO:0000255" key="1">
    <source>
        <dbReference type="HAMAP-Rule" id="MF_00651"/>
    </source>
</evidence>
<name>YQGF_NEIMF</name>
<accession>A1KUG2</accession>
<sequence length="151" mass="16600">MHKIPKGTALAFDFGEARIGVAQGDAELGLSHPLSTVTGGSNDEKFAAIAKLVQEWQPRYFVVGLPVHTDGTKHEMTHLSRKFGRRLNGRFNLPVYWVDERLSSVYAESLLSEAQVFGKKRKSVLDQVAAQAILHGFFEGGPAECFNGREG</sequence>
<keyword id="KW-0963">Cytoplasm</keyword>
<keyword id="KW-0378">Hydrolase</keyword>
<keyword id="KW-0540">Nuclease</keyword>
<keyword id="KW-0690">Ribosome biogenesis</keyword>
<reference key="1">
    <citation type="journal article" date="2007" name="PLoS Genet.">
        <title>Meningococcal genetic variation mechanisms viewed through comparative analysis of serogroup C strain FAM18.</title>
        <authorList>
            <person name="Bentley S.D."/>
            <person name="Vernikos G.S."/>
            <person name="Snyder L.A.S."/>
            <person name="Churcher C."/>
            <person name="Arrowsmith C."/>
            <person name="Chillingworth T."/>
            <person name="Cronin A."/>
            <person name="Davis P.H."/>
            <person name="Holroyd N.E."/>
            <person name="Jagels K."/>
            <person name="Maddison M."/>
            <person name="Moule S."/>
            <person name="Rabbinowitsch E."/>
            <person name="Sharp S."/>
            <person name="Unwin L."/>
            <person name="Whitehead S."/>
            <person name="Quail M.A."/>
            <person name="Achtman M."/>
            <person name="Barrell B.G."/>
            <person name="Saunders N.J."/>
            <person name="Parkhill J."/>
        </authorList>
    </citation>
    <scope>NUCLEOTIDE SEQUENCE [LARGE SCALE GENOMIC DNA]</scope>
    <source>
        <strain>ATCC 700532 / DSM 15464 / FAM18</strain>
    </source>
</reference>
<organism>
    <name type="scientific">Neisseria meningitidis serogroup C / serotype 2a (strain ATCC 700532 / DSM 15464 / FAM18)</name>
    <dbReference type="NCBI Taxonomy" id="272831"/>
    <lineage>
        <taxon>Bacteria</taxon>
        <taxon>Pseudomonadati</taxon>
        <taxon>Pseudomonadota</taxon>
        <taxon>Betaproteobacteria</taxon>
        <taxon>Neisseriales</taxon>
        <taxon>Neisseriaceae</taxon>
        <taxon>Neisseria</taxon>
    </lineage>
</organism>
<protein>
    <recommendedName>
        <fullName evidence="1">Putative pre-16S rRNA nuclease</fullName>
        <ecNumber evidence="1">3.1.-.-</ecNumber>
    </recommendedName>
</protein>
<dbReference type="EC" id="3.1.-.-" evidence="1"/>
<dbReference type="EMBL" id="AM421808">
    <property type="protein sequence ID" value="CAM10505.1"/>
    <property type="molecule type" value="Genomic_DNA"/>
</dbReference>
<dbReference type="SMR" id="A1KUG2"/>
<dbReference type="KEGG" id="nmc:NMC1275"/>
<dbReference type="HOGENOM" id="CLU_098240_3_2_4"/>
<dbReference type="Proteomes" id="UP000002286">
    <property type="component" value="Chromosome"/>
</dbReference>
<dbReference type="GO" id="GO:0005829">
    <property type="term" value="C:cytosol"/>
    <property type="evidence" value="ECO:0007669"/>
    <property type="project" value="TreeGrafter"/>
</dbReference>
<dbReference type="GO" id="GO:0004518">
    <property type="term" value="F:nuclease activity"/>
    <property type="evidence" value="ECO:0007669"/>
    <property type="project" value="UniProtKB-KW"/>
</dbReference>
<dbReference type="GO" id="GO:0000967">
    <property type="term" value="P:rRNA 5'-end processing"/>
    <property type="evidence" value="ECO:0007669"/>
    <property type="project" value="UniProtKB-UniRule"/>
</dbReference>
<dbReference type="CDD" id="cd16964">
    <property type="entry name" value="YqgF"/>
    <property type="match status" value="1"/>
</dbReference>
<dbReference type="FunFam" id="3.30.420.140:FF:000012">
    <property type="entry name" value="Putative pre-16S rRNA nuclease"/>
    <property type="match status" value="1"/>
</dbReference>
<dbReference type="Gene3D" id="3.30.420.140">
    <property type="entry name" value="YqgF/RNase H-like domain"/>
    <property type="match status" value="1"/>
</dbReference>
<dbReference type="HAMAP" id="MF_00651">
    <property type="entry name" value="Nuclease_YqgF"/>
    <property type="match status" value="1"/>
</dbReference>
<dbReference type="InterPro" id="IPR012337">
    <property type="entry name" value="RNaseH-like_sf"/>
</dbReference>
<dbReference type="InterPro" id="IPR005227">
    <property type="entry name" value="YqgF"/>
</dbReference>
<dbReference type="InterPro" id="IPR006641">
    <property type="entry name" value="YqgF/RNaseH-like_dom"/>
</dbReference>
<dbReference type="InterPro" id="IPR037027">
    <property type="entry name" value="YqgF/RNaseH-like_dom_sf"/>
</dbReference>
<dbReference type="NCBIfam" id="TIGR00250">
    <property type="entry name" value="RNAse_H_YqgF"/>
    <property type="match status" value="1"/>
</dbReference>
<dbReference type="PANTHER" id="PTHR33317">
    <property type="entry name" value="POLYNUCLEOTIDYL TRANSFERASE, RIBONUCLEASE H-LIKE SUPERFAMILY PROTEIN"/>
    <property type="match status" value="1"/>
</dbReference>
<dbReference type="PANTHER" id="PTHR33317:SF4">
    <property type="entry name" value="POLYNUCLEOTIDYL TRANSFERASE, RIBONUCLEASE H-LIKE SUPERFAMILY PROTEIN"/>
    <property type="match status" value="1"/>
</dbReference>
<dbReference type="Pfam" id="PF03652">
    <property type="entry name" value="RuvX"/>
    <property type="match status" value="1"/>
</dbReference>
<dbReference type="SMART" id="SM00732">
    <property type="entry name" value="YqgFc"/>
    <property type="match status" value="1"/>
</dbReference>
<dbReference type="SUPFAM" id="SSF53098">
    <property type="entry name" value="Ribonuclease H-like"/>
    <property type="match status" value="1"/>
</dbReference>
<proteinExistence type="inferred from homology"/>
<comment type="function">
    <text evidence="1">Could be a nuclease involved in processing of the 5'-end of pre-16S rRNA.</text>
</comment>
<comment type="subcellular location">
    <subcellularLocation>
        <location evidence="1">Cytoplasm</location>
    </subcellularLocation>
</comment>
<comment type="similarity">
    <text evidence="1">Belongs to the YqgF nuclease family.</text>
</comment>